<sequence>MRTVVWQSLSEEQQDAILERPAIAEGANITAAVADVIAKVRTQGDAALLELTEKFDRVKPESIRVPSKEINAASERLSAEMKQALEQAYSNIAKFHKAQKPQPIKVETQPGVMCEQVTRPIQKVGLYIPGGSAPLPSTVLMLGVPAKIAGCRKVVLCSPPPIADEILYVAKLCGIDEVYNVGGGQAVAAMAYGTKSVSKVDKIFGPGNAYVTEAKRQVSNDFRGAAIDMPAGPSEVLVIADETADPDFIAADLLSQAEHGPDSQVVLVTPSPIVADQVTDAVQRQLKALSRADIAQKALASSLIIISESITQAVSISNYYGPEHLIVQTKNPRELLPLLDNAGSIFLGDWSPESAGDYASGTNHVLPTYGYTRTYSSLGLADFSKRMTVQELSAEGLQNLAPTVVTMAEAEGLDAHKRAVTIRVEKLTQNR</sequence>
<gene>
    <name evidence="1" type="primary">hisD</name>
    <name type="ordered locus">VP1138</name>
</gene>
<keyword id="KW-0028">Amino-acid biosynthesis</keyword>
<keyword id="KW-0368">Histidine biosynthesis</keyword>
<keyword id="KW-0479">Metal-binding</keyword>
<keyword id="KW-0520">NAD</keyword>
<keyword id="KW-0560">Oxidoreductase</keyword>
<keyword id="KW-0862">Zinc</keyword>
<proteinExistence type="inferred from homology"/>
<reference key="1">
    <citation type="journal article" date="2003" name="Lancet">
        <title>Genome sequence of Vibrio parahaemolyticus: a pathogenic mechanism distinct from that of V. cholerae.</title>
        <authorList>
            <person name="Makino K."/>
            <person name="Oshima K."/>
            <person name="Kurokawa K."/>
            <person name="Yokoyama K."/>
            <person name="Uda T."/>
            <person name="Tagomori K."/>
            <person name="Iijima Y."/>
            <person name="Najima M."/>
            <person name="Nakano M."/>
            <person name="Yamashita A."/>
            <person name="Kubota Y."/>
            <person name="Kimura S."/>
            <person name="Yasunaga T."/>
            <person name="Honda T."/>
            <person name="Shinagawa H."/>
            <person name="Hattori M."/>
            <person name="Iida T."/>
        </authorList>
    </citation>
    <scope>NUCLEOTIDE SEQUENCE [LARGE SCALE GENOMIC DNA]</scope>
    <source>
        <strain>RIMD 2210633</strain>
    </source>
</reference>
<evidence type="ECO:0000255" key="1">
    <source>
        <dbReference type="HAMAP-Rule" id="MF_01024"/>
    </source>
</evidence>
<organism>
    <name type="scientific">Vibrio parahaemolyticus serotype O3:K6 (strain RIMD 2210633)</name>
    <dbReference type="NCBI Taxonomy" id="223926"/>
    <lineage>
        <taxon>Bacteria</taxon>
        <taxon>Pseudomonadati</taxon>
        <taxon>Pseudomonadota</taxon>
        <taxon>Gammaproteobacteria</taxon>
        <taxon>Vibrionales</taxon>
        <taxon>Vibrionaceae</taxon>
        <taxon>Vibrio</taxon>
    </lineage>
</organism>
<name>HISX_VIBPA</name>
<feature type="chain" id="PRO_0000135876" description="Histidinol dehydrogenase">
    <location>
        <begin position="1"/>
        <end position="431"/>
    </location>
</feature>
<feature type="active site" description="Proton acceptor" evidence="1">
    <location>
        <position position="323"/>
    </location>
</feature>
<feature type="active site" description="Proton acceptor" evidence="1">
    <location>
        <position position="324"/>
    </location>
</feature>
<feature type="binding site" evidence="1">
    <location>
        <position position="127"/>
    </location>
    <ligand>
        <name>NAD(+)</name>
        <dbReference type="ChEBI" id="CHEBI:57540"/>
    </ligand>
</feature>
<feature type="binding site" evidence="1">
    <location>
        <position position="185"/>
    </location>
    <ligand>
        <name>NAD(+)</name>
        <dbReference type="ChEBI" id="CHEBI:57540"/>
    </ligand>
</feature>
<feature type="binding site" evidence="1">
    <location>
        <position position="208"/>
    </location>
    <ligand>
        <name>NAD(+)</name>
        <dbReference type="ChEBI" id="CHEBI:57540"/>
    </ligand>
</feature>
<feature type="binding site" evidence="1">
    <location>
        <position position="234"/>
    </location>
    <ligand>
        <name>substrate</name>
    </ligand>
</feature>
<feature type="binding site" evidence="1">
    <location>
        <position position="256"/>
    </location>
    <ligand>
        <name>substrate</name>
    </ligand>
</feature>
<feature type="binding site" evidence="1">
    <location>
        <position position="256"/>
    </location>
    <ligand>
        <name>Zn(2+)</name>
        <dbReference type="ChEBI" id="CHEBI:29105"/>
    </ligand>
</feature>
<feature type="binding site" evidence="1">
    <location>
        <position position="259"/>
    </location>
    <ligand>
        <name>substrate</name>
    </ligand>
</feature>
<feature type="binding site" evidence="1">
    <location>
        <position position="259"/>
    </location>
    <ligand>
        <name>Zn(2+)</name>
        <dbReference type="ChEBI" id="CHEBI:29105"/>
    </ligand>
</feature>
<feature type="binding site" evidence="1">
    <location>
        <position position="324"/>
    </location>
    <ligand>
        <name>substrate</name>
    </ligand>
</feature>
<feature type="binding site" evidence="1">
    <location>
        <position position="357"/>
    </location>
    <ligand>
        <name>substrate</name>
    </ligand>
</feature>
<feature type="binding site" evidence="1">
    <location>
        <position position="357"/>
    </location>
    <ligand>
        <name>Zn(2+)</name>
        <dbReference type="ChEBI" id="CHEBI:29105"/>
    </ligand>
</feature>
<feature type="binding site" evidence="1">
    <location>
        <position position="411"/>
    </location>
    <ligand>
        <name>substrate</name>
    </ligand>
</feature>
<feature type="binding site" evidence="1">
    <location>
        <position position="416"/>
    </location>
    <ligand>
        <name>substrate</name>
    </ligand>
</feature>
<feature type="binding site" evidence="1">
    <location>
        <position position="416"/>
    </location>
    <ligand>
        <name>Zn(2+)</name>
        <dbReference type="ChEBI" id="CHEBI:29105"/>
    </ligand>
</feature>
<dbReference type="EC" id="1.1.1.23" evidence="1"/>
<dbReference type="EMBL" id="BA000031">
    <property type="protein sequence ID" value="BAC59401.1"/>
    <property type="molecule type" value="Genomic_DNA"/>
</dbReference>
<dbReference type="RefSeq" id="NP_797517.1">
    <property type="nucleotide sequence ID" value="NC_004603.1"/>
</dbReference>
<dbReference type="RefSeq" id="WP_005480396.1">
    <property type="nucleotide sequence ID" value="NC_004603.1"/>
</dbReference>
<dbReference type="SMR" id="Q87QL1"/>
<dbReference type="GeneID" id="1188643"/>
<dbReference type="KEGG" id="vpa:VP1138"/>
<dbReference type="PATRIC" id="fig|223926.6.peg.1080"/>
<dbReference type="eggNOG" id="COG0141">
    <property type="taxonomic scope" value="Bacteria"/>
</dbReference>
<dbReference type="HOGENOM" id="CLU_006732_3_0_6"/>
<dbReference type="UniPathway" id="UPA00031">
    <property type="reaction ID" value="UER00014"/>
</dbReference>
<dbReference type="Proteomes" id="UP000002493">
    <property type="component" value="Chromosome 1"/>
</dbReference>
<dbReference type="GO" id="GO:0005829">
    <property type="term" value="C:cytosol"/>
    <property type="evidence" value="ECO:0007669"/>
    <property type="project" value="TreeGrafter"/>
</dbReference>
<dbReference type="GO" id="GO:0004399">
    <property type="term" value="F:histidinol dehydrogenase activity"/>
    <property type="evidence" value="ECO:0007669"/>
    <property type="project" value="UniProtKB-UniRule"/>
</dbReference>
<dbReference type="GO" id="GO:0051287">
    <property type="term" value="F:NAD binding"/>
    <property type="evidence" value="ECO:0007669"/>
    <property type="project" value="InterPro"/>
</dbReference>
<dbReference type="GO" id="GO:0008270">
    <property type="term" value="F:zinc ion binding"/>
    <property type="evidence" value="ECO:0007669"/>
    <property type="project" value="UniProtKB-UniRule"/>
</dbReference>
<dbReference type="GO" id="GO:0000105">
    <property type="term" value="P:L-histidine biosynthetic process"/>
    <property type="evidence" value="ECO:0007669"/>
    <property type="project" value="UniProtKB-UniRule"/>
</dbReference>
<dbReference type="CDD" id="cd06572">
    <property type="entry name" value="Histidinol_dh"/>
    <property type="match status" value="1"/>
</dbReference>
<dbReference type="FunFam" id="3.40.50.1980:FF:000001">
    <property type="entry name" value="Histidinol dehydrogenase"/>
    <property type="match status" value="1"/>
</dbReference>
<dbReference type="FunFam" id="1.20.5.1300:FF:000002">
    <property type="entry name" value="Histidinol dehydrogenase, chloroplastic"/>
    <property type="match status" value="1"/>
</dbReference>
<dbReference type="Gene3D" id="1.20.5.1300">
    <property type="match status" value="1"/>
</dbReference>
<dbReference type="Gene3D" id="3.40.50.1980">
    <property type="entry name" value="Nitrogenase molybdenum iron protein domain"/>
    <property type="match status" value="2"/>
</dbReference>
<dbReference type="HAMAP" id="MF_01024">
    <property type="entry name" value="HisD"/>
    <property type="match status" value="1"/>
</dbReference>
<dbReference type="InterPro" id="IPR016161">
    <property type="entry name" value="Ald_DH/histidinol_DH"/>
</dbReference>
<dbReference type="InterPro" id="IPR001692">
    <property type="entry name" value="Histidinol_DH_CS"/>
</dbReference>
<dbReference type="InterPro" id="IPR022695">
    <property type="entry name" value="Histidinol_DH_monofunct"/>
</dbReference>
<dbReference type="InterPro" id="IPR012131">
    <property type="entry name" value="Hstdl_DH"/>
</dbReference>
<dbReference type="NCBIfam" id="TIGR00069">
    <property type="entry name" value="hisD"/>
    <property type="match status" value="1"/>
</dbReference>
<dbReference type="PANTHER" id="PTHR21256:SF2">
    <property type="entry name" value="HISTIDINE BIOSYNTHESIS TRIFUNCTIONAL PROTEIN"/>
    <property type="match status" value="1"/>
</dbReference>
<dbReference type="PANTHER" id="PTHR21256">
    <property type="entry name" value="HISTIDINOL DEHYDROGENASE HDH"/>
    <property type="match status" value="1"/>
</dbReference>
<dbReference type="Pfam" id="PF00815">
    <property type="entry name" value="Histidinol_dh"/>
    <property type="match status" value="1"/>
</dbReference>
<dbReference type="PIRSF" id="PIRSF000099">
    <property type="entry name" value="Histidinol_dh"/>
    <property type="match status" value="1"/>
</dbReference>
<dbReference type="PRINTS" id="PR00083">
    <property type="entry name" value="HOLDHDRGNASE"/>
</dbReference>
<dbReference type="SUPFAM" id="SSF53720">
    <property type="entry name" value="ALDH-like"/>
    <property type="match status" value="1"/>
</dbReference>
<dbReference type="PROSITE" id="PS00611">
    <property type="entry name" value="HISOL_DEHYDROGENASE"/>
    <property type="match status" value="1"/>
</dbReference>
<accession>Q87QL1</accession>
<comment type="function">
    <text evidence="1">Catalyzes the sequential NAD-dependent oxidations of L-histidinol to L-histidinaldehyde and then to L-histidine.</text>
</comment>
<comment type="catalytic activity">
    <reaction evidence="1">
        <text>L-histidinol + 2 NAD(+) + H2O = L-histidine + 2 NADH + 3 H(+)</text>
        <dbReference type="Rhea" id="RHEA:20641"/>
        <dbReference type="ChEBI" id="CHEBI:15377"/>
        <dbReference type="ChEBI" id="CHEBI:15378"/>
        <dbReference type="ChEBI" id="CHEBI:57540"/>
        <dbReference type="ChEBI" id="CHEBI:57595"/>
        <dbReference type="ChEBI" id="CHEBI:57699"/>
        <dbReference type="ChEBI" id="CHEBI:57945"/>
        <dbReference type="EC" id="1.1.1.23"/>
    </reaction>
</comment>
<comment type="cofactor">
    <cofactor evidence="1">
        <name>Zn(2+)</name>
        <dbReference type="ChEBI" id="CHEBI:29105"/>
    </cofactor>
    <text evidence="1">Binds 1 zinc ion per subunit.</text>
</comment>
<comment type="pathway">
    <text evidence="1">Amino-acid biosynthesis; L-histidine biosynthesis; L-histidine from 5-phospho-alpha-D-ribose 1-diphosphate: step 9/9.</text>
</comment>
<comment type="similarity">
    <text evidence="1">Belongs to the histidinol dehydrogenase family.</text>
</comment>
<protein>
    <recommendedName>
        <fullName evidence="1">Histidinol dehydrogenase</fullName>
        <shortName evidence="1">HDH</shortName>
        <ecNumber evidence="1">1.1.1.23</ecNumber>
    </recommendedName>
</protein>